<evidence type="ECO:0000250" key="1"/>
<evidence type="ECO:0000255" key="2"/>
<evidence type="ECO:0000305" key="3"/>
<feature type="chain" id="PRO_0000212042" description="Universal stress protein B">
    <location>
        <begin position="1"/>
        <end position="111"/>
    </location>
</feature>
<feature type="transmembrane region" description="Helical" evidence="2">
    <location>
        <begin position="1"/>
        <end position="21"/>
    </location>
</feature>
<feature type="topological domain" description="Cytoplasmic" evidence="2">
    <location>
        <begin position="22"/>
        <end position="89"/>
    </location>
</feature>
<feature type="transmembrane region" description="Helical" evidence="2">
    <location>
        <begin position="90"/>
        <end position="110"/>
    </location>
</feature>
<feature type="topological domain" description="Periplasmic" evidence="2">
    <location>
        <position position="111"/>
    </location>
</feature>
<gene>
    <name type="primary">uspB</name>
    <name type="ordered locus">Z4894</name>
    <name type="ordered locus">ECs4366</name>
</gene>
<reference key="1">
    <citation type="journal article" date="2001" name="Nature">
        <title>Genome sequence of enterohaemorrhagic Escherichia coli O157:H7.</title>
        <authorList>
            <person name="Perna N.T."/>
            <person name="Plunkett G. III"/>
            <person name="Burland V."/>
            <person name="Mau B."/>
            <person name="Glasner J.D."/>
            <person name="Rose D.J."/>
            <person name="Mayhew G.F."/>
            <person name="Evans P.S."/>
            <person name="Gregor J."/>
            <person name="Kirkpatrick H.A."/>
            <person name="Posfai G."/>
            <person name="Hackett J."/>
            <person name="Klink S."/>
            <person name="Boutin A."/>
            <person name="Shao Y."/>
            <person name="Miller L."/>
            <person name="Grotbeck E.J."/>
            <person name="Davis N.W."/>
            <person name="Lim A."/>
            <person name="Dimalanta E.T."/>
            <person name="Potamousis K."/>
            <person name="Apodaca J."/>
            <person name="Anantharaman T.S."/>
            <person name="Lin J."/>
            <person name="Yen G."/>
            <person name="Schwartz D.C."/>
            <person name="Welch R.A."/>
            <person name="Blattner F.R."/>
        </authorList>
    </citation>
    <scope>NUCLEOTIDE SEQUENCE [LARGE SCALE GENOMIC DNA]</scope>
    <source>
        <strain>O157:H7 / EDL933 / ATCC 700927 / EHEC</strain>
    </source>
</reference>
<reference key="2">
    <citation type="journal article" date="2001" name="DNA Res.">
        <title>Complete genome sequence of enterohemorrhagic Escherichia coli O157:H7 and genomic comparison with a laboratory strain K-12.</title>
        <authorList>
            <person name="Hayashi T."/>
            <person name="Makino K."/>
            <person name="Ohnishi M."/>
            <person name="Kurokawa K."/>
            <person name="Ishii K."/>
            <person name="Yokoyama K."/>
            <person name="Han C.-G."/>
            <person name="Ohtsubo E."/>
            <person name="Nakayama K."/>
            <person name="Murata T."/>
            <person name="Tanaka M."/>
            <person name="Tobe T."/>
            <person name="Iida T."/>
            <person name="Takami H."/>
            <person name="Honda T."/>
            <person name="Sasakawa C."/>
            <person name="Ogasawara N."/>
            <person name="Yasunaga T."/>
            <person name="Kuhara S."/>
            <person name="Shiba T."/>
            <person name="Hattori M."/>
            <person name="Shinagawa H."/>
        </authorList>
    </citation>
    <scope>NUCLEOTIDE SEQUENCE [LARGE SCALE GENOMIC DNA]</scope>
    <source>
        <strain>O157:H7 / Sakai / RIMD 0509952 / EHEC</strain>
    </source>
</reference>
<accession>P0A8S7</accession>
<accession>P37632</accession>
<dbReference type="EMBL" id="AE005174">
    <property type="protein sequence ID" value="AAG58626.1"/>
    <property type="molecule type" value="Genomic_DNA"/>
</dbReference>
<dbReference type="EMBL" id="BA000007">
    <property type="protein sequence ID" value="BAB37789.1"/>
    <property type="molecule type" value="Genomic_DNA"/>
</dbReference>
<dbReference type="PIR" id="F86020">
    <property type="entry name" value="F86020"/>
</dbReference>
<dbReference type="PIR" id="F91174">
    <property type="entry name" value="F91174"/>
</dbReference>
<dbReference type="RefSeq" id="NP_312393.1">
    <property type="nucleotide sequence ID" value="NC_002695.1"/>
</dbReference>
<dbReference type="RefSeq" id="WP_000626187.1">
    <property type="nucleotide sequence ID" value="NZ_VOAI01000004.1"/>
</dbReference>
<dbReference type="SMR" id="P0A8S7"/>
<dbReference type="STRING" id="155864.Z4894"/>
<dbReference type="GeneID" id="915774"/>
<dbReference type="GeneID" id="93778499"/>
<dbReference type="KEGG" id="ece:Z4894"/>
<dbReference type="KEGG" id="ecs:ECs_4366"/>
<dbReference type="PATRIC" id="fig|386585.9.peg.4560"/>
<dbReference type="eggNOG" id="ENOG502ZP3V">
    <property type="taxonomic scope" value="Bacteria"/>
</dbReference>
<dbReference type="HOGENOM" id="CLU_151816_0_0_6"/>
<dbReference type="OMA" id="THGQLNK"/>
<dbReference type="Proteomes" id="UP000000558">
    <property type="component" value="Chromosome"/>
</dbReference>
<dbReference type="Proteomes" id="UP000002519">
    <property type="component" value="Chromosome"/>
</dbReference>
<dbReference type="GO" id="GO:0005886">
    <property type="term" value="C:plasma membrane"/>
    <property type="evidence" value="ECO:0007669"/>
    <property type="project" value="UniProtKB-SubCell"/>
</dbReference>
<dbReference type="HAMAP" id="MF_01088">
    <property type="entry name" value="UspB"/>
    <property type="match status" value="1"/>
</dbReference>
<dbReference type="InterPro" id="IPR019598">
    <property type="entry name" value="Universal_stress_protein_B"/>
</dbReference>
<dbReference type="NCBIfam" id="NF003435">
    <property type="entry name" value="PRK04960.1"/>
    <property type="match status" value="1"/>
</dbReference>
<dbReference type="Pfam" id="PF10625">
    <property type="entry name" value="UspB"/>
    <property type="match status" value="1"/>
</dbReference>
<proteinExistence type="inferred from homology"/>
<protein>
    <recommendedName>
        <fullName>Universal stress protein B</fullName>
    </recommendedName>
</protein>
<sequence length="111" mass="13027">MISTVALFWALCVVCIVNMARYFSSLRALLVVLRNCDPLLYQYVDGGGFFTSHGQPNKQVRLVWYIYAQRYRDHHDDEFIRRCERVRRQFILTSALCGLVVVSLIALMIWH</sequence>
<organism>
    <name type="scientific">Escherichia coli O157:H7</name>
    <dbReference type="NCBI Taxonomy" id="83334"/>
    <lineage>
        <taxon>Bacteria</taxon>
        <taxon>Pseudomonadati</taxon>
        <taxon>Pseudomonadota</taxon>
        <taxon>Gammaproteobacteria</taxon>
        <taxon>Enterobacterales</taxon>
        <taxon>Enterobacteriaceae</taxon>
        <taxon>Escherichia</taxon>
    </lineage>
</organism>
<comment type="subcellular location">
    <subcellularLocation>
        <location evidence="1">Cell inner membrane</location>
        <topology evidence="1">Multi-pass membrane protein</topology>
    </subcellularLocation>
</comment>
<comment type="similarity">
    <text evidence="3">Belongs to the universal stress protein B family.</text>
</comment>
<name>USPB_ECO57</name>
<keyword id="KW-0997">Cell inner membrane</keyword>
<keyword id="KW-1003">Cell membrane</keyword>
<keyword id="KW-0472">Membrane</keyword>
<keyword id="KW-1185">Reference proteome</keyword>
<keyword id="KW-0812">Transmembrane</keyword>
<keyword id="KW-1133">Transmembrane helix</keyword>